<gene>
    <name evidence="1" type="primary">gpmA</name>
    <name type="ordered locus">SCH_0770</name>
</gene>
<reference key="1">
    <citation type="journal article" date="2005" name="Nucleic Acids Res.">
        <title>The genome sequence of Salmonella enterica serovar Choleraesuis, a highly invasive and resistant zoonotic pathogen.</title>
        <authorList>
            <person name="Chiu C.-H."/>
            <person name="Tang P."/>
            <person name="Chu C."/>
            <person name="Hu S."/>
            <person name="Bao Q."/>
            <person name="Yu J."/>
            <person name="Chou Y.-Y."/>
            <person name="Wang H.-S."/>
            <person name="Lee Y.-S."/>
        </authorList>
    </citation>
    <scope>NUCLEOTIDE SEQUENCE [LARGE SCALE GENOMIC DNA]</scope>
    <source>
        <strain>SC-B67</strain>
    </source>
</reference>
<organism>
    <name type="scientific">Salmonella choleraesuis (strain SC-B67)</name>
    <dbReference type="NCBI Taxonomy" id="321314"/>
    <lineage>
        <taxon>Bacteria</taxon>
        <taxon>Pseudomonadati</taxon>
        <taxon>Pseudomonadota</taxon>
        <taxon>Gammaproteobacteria</taxon>
        <taxon>Enterobacterales</taxon>
        <taxon>Enterobacteriaceae</taxon>
        <taxon>Salmonella</taxon>
    </lineage>
</organism>
<feature type="chain" id="PRO_0000229138" description="2,3-bisphosphoglycerate-dependent phosphoglycerate mutase">
    <location>
        <begin position="1"/>
        <end position="250"/>
    </location>
</feature>
<feature type="active site" description="Tele-phosphohistidine intermediate" evidence="1">
    <location>
        <position position="11"/>
    </location>
</feature>
<feature type="active site" description="Proton donor/acceptor" evidence="1">
    <location>
        <position position="89"/>
    </location>
</feature>
<feature type="binding site" evidence="1">
    <location>
        <begin position="10"/>
        <end position="17"/>
    </location>
    <ligand>
        <name>substrate</name>
    </ligand>
</feature>
<feature type="binding site" evidence="1">
    <location>
        <begin position="23"/>
        <end position="24"/>
    </location>
    <ligand>
        <name>substrate</name>
    </ligand>
</feature>
<feature type="binding site" evidence="1">
    <location>
        <position position="62"/>
    </location>
    <ligand>
        <name>substrate</name>
    </ligand>
</feature>
<feature type="binding site" evidence="1">
    <location>
        <begin position="89"/>
        <end position="92"/>
    </location>
    <ligand>
        <name>substrate</name>
    </ligand>
</feature>
<feature type="binding site" evidence="1">
    <location>
        <position position="100"/>
    </location>
    <ligand>
        <name>substrate</name>
    </ligand>
</feature>
<feature type="binding site" evidence="1">
    <location>
        <begin position="116"/>
        <end position="117"/>
    </location>
    <ligand>
        <name>substrate</name>
    </ligand>
</feature>
<feature type="binding site" evidence="1">
    <location>
        <begin position="185"/>
        <end position="186"/>
    </location>
    <ligand>
        <name>substrate</name>
    </ligand>
</feature>
<feature type="site" description="Transition state stabilizer" evidence="1">
    <location>
        <position position="184"/>
    </location>
</feature>
<accession>Q57RI5</accession>
<dbReference type="EC" id="5.4.2.11" evidence="1"/>
<dbReference type="EMBL" id="AE017220">
    <property type="protein sequence ID" value="AAX64676.1"/>
    <property type="molecule type" value="Genomic_DNA"/>
</dbReference>
<dbReference type="RefSeq" id="WP_000301554.1">
    <property type="nucleotide sequence ID" value="NC_006905.1"/>
</dbReference>
<dbReference type="SMR" id="Q57RI5"/>
<dbReference type="KEGG" id="sec:SCH_0770"/>
<dbReference type="HOGENOM" id="CLU_033323_1_1_6"/>
<dbReference type="UniPathway" id="UPA00109">
    <property type="reaction ID" value="UER00186"/>
</dbReference>
<dbReference type="Proteomes" id="UP000000538">
    <property type="component" value="Chromosome"/>
</dbReference>
<dbReference type="GO" id="GO:0004619">
    <property type="term" value="F:phosphoglycerate mutase activity"/>
    <property type="evidence" value="ECO:0007669"/>
    <property type="project" value="UniProtKB-EC"/>
</dbReference>
<dbReference type="GO" id="GO:0006094">
    <property type="term" value="P:gluconeogenesis"/>
    <property type="evidence" value="ECO:0007669"/>
    <property type="project" value="UniProtKB-UniRule"/>
</dbReference>
<dbReference type="GO" id="GO:0006096">
    <property type="term" value="P:glycolytic process"/>
    <property type="evidence" value="ECO:0007669"/>
    <property type="project" value="UniProtKB-UniRule"/>
</dbReference>
<dbReference type="CDD" id="cd07067">
    <property type="entry name" value="HP_PGM_like"/>
    <property type="match status" value="1"/>
</dbReference>
<dbReference type="FunFam" id="3.40.50.1240:FF:000003">
    <property type="entry name" value="2,3-bisphosphoglycerate-dependent phosphoglycerate mutase"/>
    <property type="match status" value="1"/>
</dbReference>
<dbReference type="Gene3D" id="3.40.50.1240">
    <property type="entry name" value="Phosphoglycerate mutase-like"/>
    <property type="match status" value="1"/>
</dbReference>
<dbReference type="HAMAP" id="MF_01039">
    <property type="entry name" value="PGAM_GpmA"/>
    <property type="match status" value="1"/>
</dbReference>
<dbReference type="InterPro" id="IPR013078">
    <property type="entry name" value="His_Pase_superF_clade-1"/>
</dbReference>
<dbReference type="InterPro" id="IPR029033">
    <property type="entry name" value="His_PPase_superfam"/>
</dbReference>
<dbReference type="InterPro" id="IPR001345">
    <property type="entry name" value="PG/BPGM_mutase_AS"/>
</dbReference>
<dbReference type="InterPro" id="IPR005952">
    <property type="entry name" value="Phosphogly_mut1"/>
</dbReference>
<dbReference type="NCBIfam" id="TIGR01258">
    <property type="entry name" value="pgm_1"/>
    <property type="match status" value="1"/>
</dbReference>
<dbReference type="NCBIfam" id="NF010713">
    <property type="entry name" value="PRK14115.1"/>
    <property type="match status" value="1"/>
</dbReference>
<dbReference type="PANTHER" id="PTHR11931">
    <property type="entry name" value="PHOSPHOGLYCERATE MUTASE"/>
    <property type="match status" value="1"/>
</dbReference>
<dbReference type="Pfam" id="PF00300">
    <property type="entry name" value="His_Phos_1"/>
    <property type="match status" value="1"/>
</dbReference>
<dbReference type="PIRSF" id="PIRSF000709">
    <property type="entry name" value="6PFK_2-Ptase"/>
    <property type="match status" value="1"/>
</dbReference>
<dbReference type="SMART" id="SM00855">
    <property type="entry name" value="PGAM"/>
    <property type="match status" value="1"/>
</dbReference>
<dbReference type="SUPFAM" id="SSF53254">
    <property type="entry name" value="Phosphoglycerate mutase-like"/>
    <property type="match status" value="1"/>
</dbReference>
<dbReference type="PROSITE" id="PS00175">
    <property type="entry name" value="PG_MUTASE"/>
    <property type="match status" value="1"/>
</dbReference>
<sequence>MAVTKLVLVRHGESQWNKENRFTGWYDVDLSEKGVSEAKAAGKLLKEEGFSFDFAYTSVLKRAIHTLWNVLDELDQAWLPVEKSWKLNERHYGALQGLNKAETAEKYGDEQVKQWRRGFAVTPPELTKDDERYPGHDPRYAKLSEKELPLTESLALTIDRVIPYWNDTILPRMKSGERVIIAAHGNSLRALVKYLDNMSEDEILELNIPTGVPLVYEFDENFKPIKHYYLGNADEIAAKAAAVANQGKAK</sequence>
<proteinExistence type="inferred from homology"/>
<comment type="function">
    <text evidence="1">Catalyzes the interconversion of 2-phosphoglycerate and 3-phosphoglycerate.</text>
</comment>
<comment type="catalytic activity">
    <reaction evidence="1">
        <text>(2R)-2-phosphoglycerate = (2R)-3-phosphoglycerate</text>
        <dbReference type="Rhea" id="RHEA:15901"/>
        <dbReference type="ChEBI" id="CHEBI:58272"/>
        <dbReference type="ChEBI" id="CHEBI:58289"/>
        <dbReference type="EC" id="5.4.2.11"/>
    </reaction>
</comment>
<comment type="pathway">
    <text evidence="1">Carbohydrate degradation; glycolysis; pyruvate from D-glyceraldehyde 3-phosphate: step 3/5.</text>
</comment>
<comment type="subunit">
    <text evidence="1">Homodimer.</text>
</comment>
<comment type="similarity">
    <text evidence="1">Belongs to the phosphoglycerate mutase family. BPG-dependent PGAM subfamily.</text>
</comment>
<keyword id="KW-0312">Gluconeogenesis</keyword>
<keyword id="KW-0324">Glycolysis</keyword>
<keyword id="KW-0413">Isomerase</keyword>
<protein>
    <recommendedName>
        <fullName evidence="1">2,3-bisphosphoglycerate-dependent phosphoglycerate mutase</fullName>
        <shortName evidence="1">BPG-dependent PGAM</shortName>
        <shortName evidence="1">PGAM</shortName>
        <shortName evidence="1">Phosphoglyceromutase</shortName>
        <shortName evidence="1">dPGM</shortName>
        <ecNumber evidence="1">5.4.2.11</ecNumber>
    </recommendedName>
</protein>
<name>GPMA_SALCH</name>
<evidence type="ECO:0000255" key="1">
    <source>
        <dbReference type="HAMAP-Rule" id="MF_01039"/>
    </source>
</evidence>